<keyword id="KW-1185">Reference proteome</keyword>
<keyword id="KW-0687">Ribonucleoprotein</keyword>
<keyword id="KW-0689">Ribosomal protein</keyword>
<organism>
    <name type="scientific">Bifidobacterium animalis subsp. lactis (strain AD011)</name>
    <dbReference type="NCBI Taxonomy" id="442563"/>
    <lineage>
        <taxon>Bacteria</taxon>
        <taxon>Bacillati</taxon>
        <taxon>Actinomycetota</taxon>
        <taxon>Actinomycetes</taxon>
        <taxon>Bifidobacteriales</taxon>
        <taxon>Bifidobacteriaceae</taxon>
        <taxon>Bifidobacterium</taxon>
    </lineage>
</organism>
<protein>
    <recommendedName>
        <fullName evidence="1">Large ribosomal subunit protein bL34</fullName>
    </recommendedName>
    <alternativeName>
        <fullName evidence="3">50S ribosomal protein L34</fullName>
    </alternativeName>
</protein>
<gene>
    <name evidence="1" type="primary">rpmH</name>
    <name type="ordered locus">BLA_1552</name>
</gene>
<accession>B8DV05</accession>
<evidence type="ECO:0000255" key="1">
    <source>
        <dbReference type="HAMAP-Rule" id="MF_00391"/>
    </source>
</evidence>
<evidence type="ECO:0000256" key="2">
    <source>
        <dbReference type="SAM" id="MobiDB-lite"/>
    </source>
</evidence>
<evidence type="ECO:0000305" key="3"/>
<feature type="chain" id="PRO_1000134426" description="Large ribosomal subunit protein bL34">
    <location>
        <begin position="1"/>
        <end position="44"/>
    </location>
</feature>
<feature type="region of interest" description="Disordered" evidence="2">
    <location>
        <begin position="1"/>
        <end position="26"/>
    </location>
</feature>
<proteinExistence type="inferred from homology"/>
<reference key="1">
    <citation type="journal article" date="2009" name="J. Bacteriol.">
        <title>Genome sequence of the probiotic bacterium Bifidobacterium animalis subsp. lactis AD011.</title>
        <authorList>
            <person name="Kim J.F."/>
            <person name="Jeong H."/>
            <person name="Yu D.S."/>
            <person name="Choi S.-H."/>
            <person name="Hur C.-G."/>
            <person name="Park M.-S."/>
            <person name="Yoon S.H."/>
            <person name="Kim D.-W."/>
            <person name="Ji G.E."/>
            <person name="Park H.-S."/>
            <person name="Oh T.K."/>
        </authorList>
    </citation>
    <scope>NUCLEOTIDE SEQUENCE [LARGE SCALE GENOMIC DNA]</scope>
    <source>
        <strain>AD011</strain>
    </source>
</reference>
<sequence>MKRTFQPNNRRRHMKSGFRVRMRTRAGRALINRRRAKGRKSLSA</sequence>
<comment type="similarity">
    <text evidence="1">Belongs to the bacterial ribosomal protein bL34 family.</text>
</comment>
<name>RL34_BIFA0</name>
<dbReference type="EMBL" id="CP001213">
    <property type="protein sequence ID" value="ACL29834.1"/>
    <property type="molecule type" value="Genomic_DNA"/>
</dbReference>
<dbReference type="RefSeq" id="WP_004219015.1">
    <property type="nucleotide sequence ID" value="NC_011835.1"/>
</dbReference>
<dbReference type="SMR" id="B8DV05"/>
<dbReference type="STRING" id="442563.BLA_1552"/>
<dbReference type="GeneID" id="29696397"/>
<dbReference type="KEGG" id="bla:BLA_1552"/>
<dbReference type="HOGENOM" id="CLU_129938_2_1_11"/>
<dbReference type="Proteomes" id="UP000002456">
    <property type="component" value="Chromosome"/>
</dbReference>
<dbReference type="GO" id="GO:1990904">
    <property type="term" value="C:ribonucleoprotein complex"/>
    <property type="evidence" value="ECO:0007669"/>
    <property type="project" value="UniProtKB-KW"/>
</dbReference>
<dbReference type="GO" id="GO:0005840">
    <property type="term" value="C:ribosome"/>
    <property type="evidence" value="ECO:0007669"/>
    <property type="project" value="UniProtKB-KW"/>
</dbReference>
<dbReference type="GO" id="GO:0003735">
    <property type="term" value="F:structural constituent of ribosome"/>
    <property type="evidence" value="ECO:0007669"/>
    <property type="project" value="InterPro"/>
</dbReference>
<dbReference type="GO" id="GO:0006412">
    <property type="term" value="P:translation"/>
    <property type="evidence" value="ECO:0007669"/>
    <property type="project" value="UniProtKB-UniRule"/>
</dbReference>
<dbReference type="FunFam" id="1.10.287.3980:FF:000001">
    <property type="entry name" value="Mitochondrial ribosomal protein L34"/>
    <property type="match status" value="1"/>
</dbReference>
<dbReference type="Gene3D" id="1.10.287.3980">
    <property type="match status" value="1"/>
</dbReference>
<dbReference type="HAMAP" id="MF_00391">
    <property type="entry name" value="Ribosomal_bL34"/>
    <property type="match status" value="1"/>
</dbReference>
<dbReference type="InterPro" id="IPR000271">
    <property type="entry name" value="Ribosomal_bL34"/>
</dbReference>
<dbReference type="InterPro" id="IPR020939">
    <property type="entry name" value="Ribosomal_bL34_CS"/>
</dbReference>
<dbReference type="NCBIfam" id="TIGR01030">
    <property type="entry name" value="rpmH_bact"/>
    <property type="match status" value="1"/>
</dbReference>
<dbReference type="PANTHER" id="PTHR14503:SF4">
    <property type="entry name" value="LARGE RIBOSOMAL SUBUNIT PROTEIN BL34M"/>
    <property type="match status" value="1"/>
</dbReference>
<dbReference type="PANTHER" id="PTHR14503">
    <property type="entry name" value="MITOCHONDRIAL RIBOSOMAL PROTEIN 34 FAMILY MEMBER"/>
    <property type="match status" value="1"/>
</dbReference>
<dbReference type="Pfam" id="PF00468">
    <property type="entry name" value="Ribosomal_L34"/>
    <property type="match status" value="1"/>
</dbReference>
<dbReference type="PROSITE" id="PS00784">
    <property type="entry name" value="RIBOSOMAL_L34"/>
    <property type="match status" value="1"/>
</dbReference>